<feature type="chain" id="PRO_0000333791" description="Nickel/cobalt efflux system RcnA">
    <location>
        <begin position="1"/>
        <end position="274"/>
    </location>
</feature>
<feature type="topological domain" description="Periplasmic" evidence="2">
    <location>
        <begin position="1"/>
        <end position="12"/>
    </location>
</feature>
<feature type="transmembrane region" description="Helical" evidence="2">
    <location>
        <begin position="13"/>
        <end position="33"/>
    </location>
</feature>
<feature type="topological domain" description="Cytoplasmic" evidence="2">
    <location>
        <begin position="34"/>
        <end position="56"/>
    </location>
</feature>
<feature type="transmembrane region" description="Helical" evidence="2">
    <location>
        <begin position="57"/>
        <end position="77"/>
    </location>
</feature>
<feature type="topological domain" description="Periplasmic" evidence="2">
    <location>
        <begin position="78"/>
        <end position="86"/>
    </location>
</feature>
<feature type="transmembrane region" description="Helical" evidence="2">
    <location>
        <begin position="87"/>
        <end position="107"/>
    </location>
</feature>
<feature type="topological domain" description="Cytoplasmic" evidence="2">
    <location>
        <begin position="108"/>
        <end position="174"/>
    </location>
</feature>
<feature type="transmembrane region" description="Helical" evidence="2">
    <location>
        <begin position="175"/>
        <end position="195"/>
    </location>
</feature>
<feature type="topological domain" description="Periplasmic" evidence="2">
    <location>
        <begin position="196"/>
        <end position="209"/>
    </location>
</feature>
<feature type="transmembrane region" description="Helical" evidence="2">
    <location>
        <begin position="210"/>
        <end position="230"/>
    </location>
</feature>
<feature type="topological domain" description="Cytoplasmic" evidence="2">
    <location>
        <begin position="231"/>
        <end position="251"/>
    </location>
</feature>
<feature type="transmembrane region" description="Helical" evidence="2">
    <location>
        <begin position="252"/>
        <end position="272"/>
    </location>
</feature>
<feature type="topological domain" description="Periplasmic" evidence="2">
    <location>
        <begin position="273"/>
        <end position="274"/>
    </location>
</feature>
<feature type="region of interest" description="Disordered" evidence="3">
    <location>
        <begin position="130"/>
        <end position="149"/>
    </location>
</feature>
<reference key="1">
    <citation type="journal article" date="2005" name="Nucleic Acids Res.">
        <title>Genome dynamics and diversity of Shigella species, the etiologic agents of bacillary dysentery.</title>
        <authorList>
            <person name="Yang F."/>
            <person name="Yang J."/>
            <person name="Zhang X."/>
            <person name="Chen L."/>
            <person name="Jiang Y."/>
            <person name="Yan Y."/>
            <person name="Tang X."/>
            <person name="Wang J."/>
            <person name="Xiong Z."/>
            <person name="Dong J."/>
            <person name="Xue Y."/>
            <person name="Zhu Y."/>
            <person name="Xu X."/>
            <person name="Sun L."/>
            <person name="Chen S."/>
            <person name="Nie H."/>
            <person name="Peng J."/>
            <person name="Xu J."/>
            <person name="Wang Y."/>
            <person name="Yuan Z."/>
            <person name="Wen Y."/>
            <person name="Yao Z."/>
            <person name="Shen Y."/>
            <person name="Qiang B."/>
            <person name="Hou Y."/>
            <person name="Yu J."/>
            <person name="Jin Q."/>
        </authorList>
    </citation>
    <scope>NUCLEOTIDE SEQUENCE [LARGE SCALE GENOMIC DNA]</scope>
    <source>
        <strain>Ss046</strain>
    </source>
</reference>
<sequence>MTEFTTLLQQGNAWFFIPSAILLGALHGLEPGHSKTMMAAFIIAIKGTIKQAVMLGLAATISHTAVVWLIAFGGMVISKRFTAQSAEPWLQLISAVIIIGTAFWMFWRTWRGERNWLENMHEYDYEHHHHDHEDHHDHGHHHHHEHGEYQDAHARAHANDIKRRFDGREVTNWQILLFGLTGGLIPCPAAITVLLICIQLKALTLGATLVVSFSIGLALTLVTVGVGAAISVQQVAKRWSGFNTLAKRAPYFSSLLIGLVGVYMGVHGFMGIMR</sequence>
<dbReference type="EMBL" id="CP000038">
    <property type="protein sequence ID" value="AAZ88808.1"/>
    <property type="molecule type" value="Genomic_DNA"/>
</dbReference>
<dbReference type="RefSeq" id="WP_000134582.1">
    <property type="nucleotide sequence ID" value="NC_007384.1"/>
</dbReference>
<dbReference type="GeneID" id="93775088"/>
<dbReference type="KEGG" id="ssn:SSON_2154"/>
<dbReference type="HOGENOM" id="CLU_058605_2_0_6"/>
<dbReference type="Proteomes" id="UP000002529">
    <property type="component" value="Chromosome"/>
</dbReference>
<dbReference type="GO" id="GO:0005886">
    <property type="term" value="C:plasma membrane"/>
    <property type="evidence" value="ECO:0007669"/>
    <property type="project" value="UniProtKB-SubCell"/>
</dbReference>
<dbReference type="GO" id="GO:0046583">
    <property type="term" value="F:monoatomic cation efflux transmembrane transporter activity"/>
    <property type="evidence" value="ECO:0007669"/>
    <property type="project" value="TreeGrafter"/>
</dbReference>
<dbReference type="GO" id="GO:0015099">
    <property type="term" value="F:nickel cation transmembrane transporter activity"/>
    <property type="evidence" value="ECO:0007669"/>
    <property type="project" value="InterPro"/>
</dbReference>
<dbReference type="GO" id="GO:0006824">
    <property type="term" value="P:cobalt ion transport"/>
    <property type="evidence" value="ECO:0007669"/>
    <property type="project" value="UniProtKB-KW"/>
</dbReference>
<dbReference type="GO" id="GO:0032025">
    <property type="term" value="P:response to cobalt ion"/>
    <property type="evidence" value="ECO:0007669"/>
    <property type="project" value="TreeGrafter"/>
</dbReference>
<dbReference type="GO" id="GO:0010045">
    <property type="term" value="P:response to nickel cation"/>
    <property type="evidence" value="ECO:0007669"/>
    <property type="project" value="TreeGrafter"/>
</dbReference>
<dbReference type="Gene3D" id="3.40.50.1980">
    <property type="entry name" value="Nitrogenase molybdenum iron protein domain"/>
    <property type="match status" value="1"/>
</dbReference>
<dbReference type="InterPro" id="IPR011541">
    <property type="entry name" value="Ni/Co_transpt_high_affinity"/>
</dbReference>
<dbReference type="InterPro" id="IPR051224">
    <property type="entry name" value="NiCoT_RcnA"/>
</dbReference>
<dbReference type="NCBIfam" id="NF007454">
    <property type="entry name" value="PRK10019.1"/>
    <property type="match status" value="1"/>
</dbReference>
<dbReference type="PANTHER" id="PTHR40659">
    <property type="entry name" value="NICKEL/COBALT EFFLUX SYSTEM RCNA"/>
    <property type="match status" value="1"/>
</dbReference>
<dbReference type="PANTHER" id="PTHR40659:SF1">
    <property type="entry name" value="NICKEL_COBALT EFFLUX SYSTEM RCNA"/>
    <property type="match status" value="1"/>
</dbReference>
<dbReference type="Pfam" id="PF03824">
    <property type="entry name" value="NicO"/>
    <property type="match status" value="1"/>
</dbReference>
<accession>Q3Z0A4</accession>
<gene>
    <name type="primary">rcnA</name>
    <name type="ordered locus">SSON_2154</name>
</gene>
<protein>
    <recommendedName>
        <fullName>Nickel/cobalt efflux system RcnA</fullName>
    </recommendedName>
</protein>
<name>RCNA_SHISS</name>
<evidence type="ECO:0000250" key="1"/>
<evidence type="ECO:0000255" key="2"/>
<evidence type="ECO:0000256" key="3">
    <source>
        <dbReference type="SAM" id="MobiDB-lite"/>
    </source>
</evidence>
<evidence type="ECO:0000305" key="4"/>
<comment type="function">
    <text evidence="1">Efflux system for nickel and cobalt.</text>
</comment>
<comment type="subcellular location">
    <subcellularLocation>
        <location evidence="1">Cell inner membrane</location>
        <topology evidence="1">Multi-pass membrane protein</topology>
    </subcellularLocation>
</comment>
<comment type="induction">
    <text evidence="1">By nickel and cobalt. Transcriptionally repressed by RcnR (By similarity).</text>
</comment>
<comment type="similarity">
    <text evidence="4">Belongs to the NiCoT transporter (TC 2.A.52) family. RcnA subfamily.</text>
</comment>
<proteinExistence type="inferred from homology"/>
<organism>
    <name type="scientific">Shigella sonnei (strain Ss046)</name>
    <dbReference type="NCBI Taxonomy" id="300269"/>
    <lineage>
        <taxon>Bacteria</taxon>
        <taxon>Pseudomonadati</taxon>
        <taxon>Pseudomonadota</taxon>
        <taxon>Gammaproteobacteria</taxon>
        <taxon>Enterobacterales</taxon>
        <taxon>Enterobacteriaceae</taxon>
        <taxon>Shigella</taxon>
    </lineage>
</organism>
<keyword id="KW-0997">Cell inner membrane</keyword>
<keyword id="KW-1003">Cell membrane</keyword>
<keyword id="KW-0170">Cobalt</keyword>
<keyword id="KW-0171">Cobalt transport</keyword>
<keyword id="KW-0406">Ion transport</keyword>
<keyword id="KW-0472">Membrane</keyword>
<keyword id="KW-0533">Nickel</keyword>
<keyword id="KW-0921">Nickel transport</keyword>
<keyword id="KW-1185">Reference proteome</keyword>
<keyword id="KW-0812">Transmembrane</keyword>
<keyword id="KW-1133">Transmembrane helix</keyword>
<keyword id="KW-0813">Transport</keyword>